<feature type="chain" id="PRO_0000239726" description="NADPH-dependent oxidoreductase">
    <location>
        <begin position="1"/>
        <end position="251"/>
    </location>
</feature>
<keyword id="KW-0285">Flavoprotein</keyword>
<keyword id="KW-0288">FMN</keyword>
<keyword id="KW-0521">NADP</keyword>
<keyword id="KW-0560">Oxidoreductase</keyword>
<accession>Q8NY77</accession>
<organism>
    <name type="scientific">Staphylococcus aureus (strain MW2)</name>
    <dbReference type="NCBI Taxonomy" id="196620"/>
    <lineage>
        <taxon>Bacteria</taxon>
        <taxon>Bacillati</taxon>
        <taxon>Bacillota</taxon>
        <taxon>Bacilli</taxon>
        <taxon>Bacillales</taxon>
        <taxon>Staphylococcaceae</taxon>
        <taxon>Staphylococcus</taxon>
    </lineage>
</organism>
<name>NFRA_STAAW</name>
<evidence type="ECO:0000250" key="1"/>
<evidence type="ECO:0000305" key="2"/>
<comment type="function">
    <text evidence="1">Reduces FMN, organic nitro compounds and disulfide DTNB. Involved in maintenance of the cellular redox state and the disulfide stress response (By similarity).</text>
</comment>
<comment type="cofactor">
    <cofactor evidence="1">
        <name>FMN</name>
        <dbReference type="ChEBI" id="CHEBI:58210"/>
    </cofactor>
</comment>
<comment type="similarity">
    <text evidence="2">Belongs to the flavin oxidoreductase frp family.</text>
</comment>
<sequence>MSEHVYNLVKKHHSVRKFKNKPLSEDVVKKLVEAGQSASTSSFLQAYSIIGIDDEKIKENLREVSGQPYVVENGYLFVFVIDYYRHHLVDQHAETDMENAYGSTEGLLVGAIDAALVAENIAVTAEDMGYGIVFLGSLRNDVERVREILDLPDYVFPVFGMAVGEPADDENGAAKPRLPFDHVFHHNKYHADKETQYAQMADYDQTISEYYNQRTNGNRKETWSQQIEMFLGNKARLDMLEQLQKSGLIQR</sequence>
<dbReference type="EC" id="1.6.-.-"/>
<dbReference type="EMBL" id="BA000033">
    <property type="protein sequence ID" value="BAB94223.1"/>
    <property type="molecule type" value="Genomic_DNA"/>
</dbReference>
<dbReference type="SMR" id="Q8NY77"/>
<dbReference type="KEGG" id="sam:MW0358"/>
<dbReference type="HOGENOM" id="CLU_070764_0_0_9"/>
<dbReference type="GO" id="GO:0016491">
    <property type="term" value="F:oxidoreductase activity"/>
    <property type="evidence" value="ECO:0007669"/>
    <property type="project" value="UniProtKB-KW"/>
</dbReference>
<dbReference type="CDD" id="cd02146">
    <property type="entry name" value="NfsA-like"/>
    <property type="match status" value="1"/>
</dbReference>
<dbReference type="Gene3D" id="3.40.109.10">
    <property type="entry name" value="NADH Oxidase"/>
    <property type="match status" value="1"/>
</dbReference>
<dbReference type="InterPro" id="IPR016446">
    <property type="entry name" value="Flavin_OxRdtase_Frp"/>
</dbReference>
<dbReference type="InterPro" id="IPR029479">
    <property type="entry name" value="Nitroreductase"/>
</dbReference>
<dbReference type="InterPro" id="IPR000415">
    <property type="entry name" value="Nitroreductase-like"/>
</dbReference>
<dbReference type="NCBIfam" id="NF008033">
    <property type="entry name" value="PRK10765.1"/>
    <property type="match status" value="1"/>
</dbReference>
<dbReference type="PANTHER" id="PTHR43425:SF3">
    <property type="entry name" value="NADPH-DEPENDENT OXIDOREDUCTASE"/>
    <property type="match status" value="1"/>
</dbReference>
<dbReference type="PANTHER" id="PTHR43425">
    <property type="entry name" value="OXYGEN-INSENSITIVE NADPH NITROREDUCTASE"/>
    <property type="match status" value="1"/>
</dbReference>
<dbReference type="Pfam" id="PF00881">
    <property type="entry name" value="Nitroreductase"/>
    <property type="match status" value="1"/>
</dbReference>
<dbReference type="PIRSF" id="PIRSF005426">
    <property type="entry name" value="Frp"/>
    <property type="match status" value="1"/>
</dbReference>
<dbReference type="SUPFAM" id="SSF55469">
    <property type="entry name" value="FMN-dependent nitroreductase-like"/>
    <property type="match status" value="1"/>
</dbReference>
<gene>
    <name type="primary">nfrA</name>
    <name type="ordered locus">MW0358</name>
</gene>
<proteinExistence type="inferred from homology"/>
<protein>
    <recommendedName>
        <fullName>NADPH-dependent oxidoreductase</fullName>
        <ecNumber>1.6.-.-</ecNumber>
    </recommendedName>
</protein>
<reference key="1">
    <citation type="journal article" date="2002" name="Lancet">
        <title>Genome and virulence determinants of high virulence community-acquired MRSA.</title>
        <authorList>
            <person name="Baba T."/>
            <person name="Takeuchi F."/>
            <person name="Kuroda M."/>
            <person name="Yuzawa H."/>
            <person name="Aoki K."/>
            <person name="Oguchi A."/>
            <person name="Nagai Y."/>
            <person name="Iwama N."/>
            <person name="Asano K."/>
            <person name="Naimi T."/>
            <person name="Kuroda H."/>
            <person name="Cui L."/>
            <person name="Yamamoto K."/>
            <person name="Hiramatsu K."/>
        </authorList>
    </citation>
    <scope>NUCLEOTIDE SEQUENCE [LARGE SCALE GENOMIC DNA]</scope>
    <source>
        <strain>MW2</strain>
    </source>
</reference>